<gene>
    <name evidence="1" type="primary">csrA</name>
    <name type="ordered locus">HAPS_0464</name>
</gene>
<accession>B8F480</accession>
<name>CSRA_GLAP5</name>
<keyword id="KW-0010">Activator</keyword>
<keyword id="KW-0963">Cytoplasm</keyword>
<keyword id="KW-1185">Reference proteome</keyword>
<keyword id="KW-0678">Repressor</keyword>
<keyword id="KW-0694">RNA-binding</keyword>
<keyword id="KW-0810">Translation regulation</keyword>
<feature type="chain" id="PRO_1000123628" description="Translational regulator CsrA">
    <location>
        <begin position="1"/>
        <end position="61"/>
    </location>
</feature>
<proteinExistence type="inferred from homology"/>
<organism>
    <name type="scientific">Glaesserella parasuis serovar 5 (strain SH0165)</name>
    <name type="common">Haemophilus parasuis</name>
    <dbReference type="NCBI Taxonomy" id="557723"/>
    <lineage>
        <taxon>Bacteria</taxon>
        <taxon>Pseudomonadati</taxon>
        <taxon>Pseudomonadota</taxon>
        <taxon>Gammaproteobacteria</taxon>
        <taxon>Pasteurellales</taxon>
        <taxon>Pasteurellaceae</taxon>
        <taxon>Glaesserella</taxon>
    </lineage>
</organism>
<protein>
    <recommendedName>
        <fullName evidence="1">Translational regulator CsrA</fullName>
    </recommendedName>
    <alternativeName>
        <fullName evidence="1">Carbon storage regulator</fullName>
    </alternativeName>
</protein>
<dbReference type="EMBL" id="CP001321">
    <property type="protein sequence ID" value="ACL32132.1"/>
    <property type="molecule type" value="Genomic_DNA"/>
</dbReference>
<dbReference type="RefSeq" id="WP_005711547.1">
    <property type="nucleotide sequence ID" value="NC_011852.1"/>
</dbReference>
<dbReference type="SMR" id="B8F480"/>
<dbReference type="STRING" id="557723.HAPS_0464"/>
<dbReference type="GeneID" id="66618900"/>
<dbReference type="KEGG" id="hap:HAPS_0464"/>
<dbReference type="HOGENOM" id="CLU_164837_2_1_6"/>
<dbReference type="Proteomes" id="UP000006743">
    <property type="component" value="Chromosome"/>
</dbReference>
<dbReference type="GO" id="GO:0005829">
    <property type="term" value="C:cytosol"/>
    <property type="evidence" value="ECO:0007669"/>
    <property type="project" value="TreeGrafter"/>
</dbReference>
<dbReference type="GO" id="GO:0048027">
    <property type="term" value="F:mRNA 5'-UTR binding"/>
    <property type="evidence" value="ECO:0007669"/>
    <property type="project" value="UniProtKB-UniRule"/>
</dbReference>
<dbReference type="GO" id="GO:0006402">
    <property type="term" value="P:mRNA catabolic process"/>
    <property type="evidence" value="ECO:0007669"/>
    <property type="project" value="InterPro"/>
</dbReference>
<dbReference type="GO" id="GO:0045947">
    <property type="term" value="P:negative regulation of translational initiation"/>
    <property type="evidence" value="ECO:0007669"/>
    <property type="project" value="UniProtKB-UniRule"/>
</dbReference>
<dbReference type="GO" id="GO:0045948">
    <property type="term" value="P:positive regulation of translational initiation"/>
    <property type="evidence" value="ECO:0007669"/>
    <property type="project" value="UniProtKB-UniRule"/>
</dbReference>
<dbReference type="GO" id="GO:0006109">
    <property type="term" value="P:regulation of carbohydrate metabolic process"/>
    <property type="evidence" value="ECO:0007669"/>
    <property type="project" value="UniProtKB-UniRule"/>
</dbReference>
<dbReference type="FunFam" id="2.60.40.4380:FF:000002">
    <property type="entry name" value="Translational regulator CsrA"/>
    <property type="match status" value="1"/>
</dbReference>
<dbReference type="Gene3D" id="2.60.40.4380">
    <property type="entry name" value="Translational regulator CsrA"/>
    <property type="match status" value="1"/>
</dbReference>
<dbReference type="HAMAP" id="MF_00167">
    <property type="entry name" value="CsrA"/>
    <property type="match status" value="1"/>
</dbReference>
<dbReference type="InterPro" id="IPR003751">
    <property type="entry name" value="CsrA"/>
</dbReference>
<dbReference type="InterPro" id="IPR036107">
    <property type="entry name" value="CsrA_sf"/>
</dbReference>
<dbReference type="NCBIfam" id="TIGR00202">
    <property type="entry name" value="csrA"/>
    <property type="match status" value="1"/>
</dbReference>
<dbReference type="NCBIfam" id="NF002469">
    <property type="entry name" value="PRK01712.1"/>
    <property type="match status" value="1"/>
</dbReference>
<dbReference type="PANTHER" id="PTHR34984">
    <property type="entry name" value="CARBON STORAGE REGULATOR"/>
    <property type="match status" value="1"/>
</dbReference>
<dbReference type="PANTHER" id="PTHR34984:SF1">
    <property type="entry name" value="CARBON STORAGE REGULATOR"/>
    <property type="match status" value="1"/>
</dbReference>
<dbReference type="Pfam" id="PF02599">
    <property type="entry name" value="CsrA"/>
    <property type="match status" value="1"/>
</dbReference>
<dbReference type="SUPFAM" id="SSF117130">
    <property type="entry name" value="CsrA-like"/>
    <property type="match status" value="1"/>
</dbReference>
<comment type="function">
    <text evidence="1">A key translational regulator that binds mRNA to regulate translation initiation and/or mRNA stability. Mediates global changes in gene expression, shifting from rapid growth to stress survival by linking envelope stress, the stringent response and the catabolite repression systems. Usually binds in the 5'-UTR; binding at or near the Shine-Dalgarno sequence prevents ribosome-binding, repressing translation, binding elsewhere in the 5'-UTR can activate translation and/or stabilize the mRNA. Its function is antagonized by small RNA(s).</text>
</comment>
<comment type="subunit">
    <text evidence="1">Homodimer; the beta-strands of each monomer intercalate to form a hydrophobic core, while the alpha-helices form wings that extend away from the core.</text>
</comment>
<comment type="subcellular location">
    <subcellularLocation>
        <location evidence="1">Cytoplasm</location>
    </subcellularLocation>
</comment>
<comment type="similarity">
    <text evidence="1">Belongs to the CsrA/RsmA family.</text>
</comment>
<evidence type="ECO:0000255" key="1">
    <source>
        <dbReference type="HAMAP-Rule" id="MF_00167"/>
    </source>
</evidence>
<reference key="1">
    <citation type="journal article" date="2009" name="J. Bacteriol.">
        <title>Complete genome sequence of Haemophilus parasuis SH0165.</title>
        <authorList>
            <person name="Yue M."/>
            <person name="Yang F."/>
            <person name="Yang J."/>
            <person name="Bei W."/>
            <person name="Cai X."/>
            <person name="Chen L."/>
            <person name="Dong J."/>
            <person name="Zhou R."/>
            <person name="Jin M."/>
            <person name="Jin Q."/>
            <person name="Chen H."/>
        </authorList>
    </citation>
    <scope>NUCLEOTIDE SEQUENCE [LARGE SCALE GENOMIC DNA]</scope>
    <source>
        <strain>SH0165</strain>
    </source>
</reference>
<sequence length="61" mass="6829">MLILTRKIGESLLIGDDVEITVLSIRGSQVKLGVKAPKEISVHREEIYQRIKVLADENPSE</sequence>